<accession>Q6WNK7</accession>
<accession>D6VQB1</accession>
<sequence length="96" mass="11085">MTMDTAQLKSQIQQYLVESGNYELISNELKARLLQEGWVDKVKDLTKSEMNINESTNFTQILSTVEPKALEMVSDSTRETVLKQIREFLEEIVDTQ</sequence>
<comment type="function">
    <text evidence="2 3 4 5 6 7 9 10 12 13 14 18 19 20 21 22">Involved in mRNA export coupled transcription activation by association with both the TREX-2 and the SAGA complexes (PubMed:14718168, PubMed:15311284, PubMed:18923079). SAGA acts as a general cofactor required for essentially all RNA polymerase II transcription (PubMed:25216679, PubMed:28918903). At the promoters, SAGA is required for transcription pre-initiation complex (PIC) recruitment. It influences RNA polymerase II transcriptional activity through different activities such as TBP interaction (via core/TAF module) and promoter selectivity, interaction with transcription activators (via Tra1/SPT module), and chromatin modification through histone acetylation (via HAT module) and deubiquitination (via DUB module) (PubMed:16855026, PubMed:31969703). SAGA preferentially acetylates histones H3 (to form H3K9ac, H3K14ac, H3K18ac and H3K23ac) and H2B and deubiquitinates histone H2B (PubMed:20395473). SAGA interacts with DNA via upstream activating sequences (UASs) (PubMed:28918903, PubMed:29598828). Also identified in a modified version of SAGA named SALSA or SLIK. The cleavage of SPT7 and the absence of the SPT8 subunit in SLIK neither drive any major conformational differences in its structure compared with SAGA, nor significantly affect HAT, DUB, or DNA-binding activities (PubMed:33864814). Within the SAGA complex, participates in a subcomplex with SGF11, SGF73 and UBP8 required for deubiquitination of H2B and for the maintenance of steady-state H3 methylation levels (PubMed:16855026). The TREX-2 complex functions in docking export-competent ribonucleoprotein particles (mRNPs) to the nuclear entrance of the nuclear pore complex (nuclear basket), by association with components of the nuclear mRNA export machinery (MEX67-MTR2 and SUB2) in the nucleoplasm and the nucleoporin NUP1 at the nuclear basket. TREX-2 participates in mRNA export and accurate chromatin positioning in the nucleus by tethering genes to the nuclear periphery (PubMed:16760982, PubMed:18003937, PubMed:19328066). SUS1 also has a role in mRNP biogenesis and maintenance of genome integrity through preventing RNA-mediated genome instability (PubMed:18667528). Has a role in response to DNA damage induced by methyl methane sulfonate (MMS) and replication arrest induced by hydroxyurea (PubMed:16510898). May also be involved in cytoplasmic mRNA decay by interaction with components of P-bodies (PubMed:20230609).</text>
</comment>
<comment type="subunit">
    <text evidence="2 3 6 8 10 17 18 21 22">Component of the 1.8 MDa SAGA (Spt-Ada-Gcn5 acetyltransferase) complex, which is composed of 19 subunits TRA1, SPT7, TAF5, NGG1/ADA3, SGF73, SPT20/ADA5, SPT8, TAF12, TAF6, HFI1/ADA1, UBP8, GCN5, ADA2, SPT3, SGF29, TAF10, TAF9, SGF11 and SUS1 (PubMed:14718168, PubMed:16855026, PubMed:18488019, PubMed:31969703). The SAGA complex is composed of 4 modules, namely the HAT (histone acetyltransferase) module (GCN5, ADA2, NGG1/ADA3 and SGF29), the DUB (deubiquitinating) module (UBP8, SGF11, SGF73 and SUS1), the core or TAF (TBP-associated factor) module (TAF5, TAF6, TAF9, TAF10 and TAF12), and the Tra1 or SPT (Suppressor of Ty) module (TRA1, HFI1/ADA1, SPT3, SPT7, SPT8 and SPT20/ADA5). The Tra1/SPT module binds activators, the core module recruits TBP (TATA-binding protein), the HAT module contains the histone H3 acetyltransferase GCN5, and the DUB module comprises the histone H2B deubiquitinase UBP8 (PubMed:25216679, PubMed:31969703). Also identified in an altered form of SAGA, named SALSA (SAGA altered, Spt8 absent) or SLIK (SAGA-like) complex, which contains a C-terminal truncated form of SPT7 and is missing SPT8 (PubMed:33864814). However, it has been shown that the SAGA and SAGA-like SALSA/SLIK transcriptional coactivators are structurally and biochemically equivalent (PubMed:33864814). Component of the nuclear pore complex (NPC)-associated TREX-2 complex (transcription and export complex 2), composed of at least SUS1, SAC3, THP1, SEM1, and CDC31. TREX-2 contains 2 SUS1 chains. The TREX-2 complex interacts with the mRNA export factors MEX67, MTR2 and SUB2, and the nucleoporin NUP1 (PubMed:14718168, PubMed:15311284, PubMed:18488019, PubMed:23599000). Interacts directly with THP1, SAC3 (PubMed:14718168, PubMed:15311284). Interacts directly with SGF11 and UBP8 (PubMed:16855026). Interacts with YRA1, MEX67 and with the RNA polymerase II (PubMed:18923079).</text>
</comment>
<comment type="interaction">
    <interactant intactId="EBI-1251050">
        <id>Q6WNK7</id>
    </interactant>
    <interactant intactId="EBI-4259">
        <id>P06704</id>
        <label>CDC31</label>
    </interactant>
    <organismsDiffer>false</organismsDiffer>
    <experiments>6</experiments>
</comment>
<comment type="interaction">
    <interactant intactId="EBI-1251050">
        <id>Q6WNK7</id>
    </interactant>
    <interactant intactId="EBI-16425">
        <id>P46674</id>
        <label>SAC3</label>
    </interactant>
    <organismsDiffer>false</organismsDiffer>
    <experiments>11</experiments>
</comment>
<comment type="interaction">
    <interactant intactId="EBI-1251050">
        <id>Q6WNK7</id>
    </interactant>
    <interactant intactId="EBI-34550">
        <id>Q03067</id>
        <label>SGF11</label>
    </interactant>
    <organismsDiffer>false</organismsDiffer>
    <experiments>13</experiments>
</comment>
<comment type="interaction">
    <interactant intactId="EBI-1251050">
        <id>Q6WNK7</id>
    </interactant>
    <interactant intactId="EBI-24638">
        <id>P38811</id>
        <label>TRA1</label>
    </interactant>
    <organismsDiffer>false</organismsDiffer>
    <experiments>6</experiments>
</comment>
<comment type="subcellular location">
    <subcellularLocation>
        <location evidence="6">Nucleus</location>
        <location evidence="6">Nucleoplasm</location>
    </subcellularLocation>
    <subcellularLocation>
        <location evidence="13">Cytoplasm</location>
        <location evidence="13">P-body</location>
    </subcellularLocation>
    <text evidence="6">The nucleoplasm localization requires the presence of UBP8 and SGF11 to bind part of SUS1 to the SAGA complex.</text>
</comment>
<comment type="induction">
    <text evidence="15 16">The gene for SUS1 bears 2 introns, and its expression is highly regulated by splicing, translation and decay. The presence of the introns thereby play a key role for SUS1 function in yeast.</text>
</comment>
<comment type="similarity">
    <text evidence="1">Belongs to the ENY2 family.</text>
</comment>
<gene>
    <name evidence="1" type="primary">SUS1</name>
    <name type="ordered locus">YBR111W-A</name>
</gene>
<proteinExistence type="evidence at protein level"/>
<organism>
    <name type="scientific">Saccharomyces cerevisiae (strain ATCC 204508 / S288c)</name>
    <name type="common">Baker's yeast</name>
    <dbReference type="NCBI Taxonomy" id="559292"/>
    <lineage>
        <taxon>Eukaryota</taxon>
        <taxon>Fungi</taxon>
        <taxon>Dikarya</taxon>
        <taxon>Ascomycota</taxon>
        <taxon>Saccharomycotina</taxon>
        <taxon>Saccharomycetes</taxon>
        <taxon>Saccharomycetales</taxon>
        <taxon>Saccharomycetaceae</taxon>
        <taxon>Saccharomyces</taxon>
    </lineage>
</organism>
<evidence type="ECO:0000255" key="1">
    <source>
        <dbReference type="HAMAP-Rule" id="MF_03046"/>
    </source>
</evidence>
<evidence type="ECO:0000269" key="2">
    <source>
    </source>
</evidence>
<evidence type="ECO:0000269" key="3">
    <source>
    </source>
</evidence>
<evidence type="ECO:0000269" key="4">
    <source>
    </source>
</evidence>
<evidence type="ECO:0000269" key="5">
    <source>
    </source>
</evidence>
<evidence type="ECO:0000269" key="6">
    <source>
    </source>
</evidence>
<evidence type="ECO:0000269" key="7">
    <source>
    </source>
</evidence>
<evidence type="ECO:0000269" key="8">
    <source>
    </source>
</evidence>
<evidence type="ECO:0000269" key="9">
    <source>
    </source>
</evidence>
<evidence type="ECO:0000269" key="10">
    <source>
    </source>
</evidence>
<evidence type="ECO:0000269" key="11">
    <source>
    </source>
</evidence>
<evidence type="ECO:0000269" key="12">
    <source>
    </source>
</evidence>
<evidence type="ECO:0000269" key="13">
    <source>
    </source>
</evidence>
<evidence type="ECO:0000269" key="14">
    <source>
    </source>
</evidence>
<evidence type="ECO:0000269" key="15">
    <source>
    </source>
</evidence>
<evidence type="ECO:0000269" key="16">
    <source>
    </source>
</evidence>
<evidence type="ECO:0000269" key="17">
    <source>
    </source>
</evidence>
<evidence type="ECO:0000269" key="18">
    <source>
    </source>
</evidence>
<evidence type="ECO:0000269" key="19">
    <source>
    </source>
</evidence>
<evidence type="ECO:0000269" key="20">
    <source>
    </source>
</evidence>
<evidence type="ECO:0000269" key="21">
    <source>
    </source>
</evidence>
<evidence type="ECO:0000269" key="22">
    <source>
    </source>
</evidence>
<evidence type="ECO:0007744" key="23">
    <source>
        <dbReference type="PDB" id="3FWB"/>
    </source>
</evidence>
<evidence type="ECO:0007744" key="24">
    <source>
        <dbReference type="PDB" id="3FWC"/>
    </source>
</evidence>
<evidence type="ECO:0007744" key="25">
    <source>
        <dbReference type="PDB" id="3KIK"/>
    </source>
</evidence>
<evidence type="ECO:0007744" key="26">
    <source>
        <dbReference type="PDB" id="3KJL"/>
    </source>
</evidence>
<evidence type="ECO:0007744" key="27">
    <source>
        <dbReference type="PDB" id="3M99"/>
    </source>
</evidence>
<evidence type="ECO:0007744" key="28">
    <source>
        <dbReference type="PDB" id="3MHH"/>
    </source>
</evidence>
<evidence type="ECO:0007744" key="29">
    <source>
        <dbReference type="PDB" id="3MHS"/>
    </source>
</evidence>
<evidence type="ECO:0007744" key="30">
    <source>
        <dbReference type="PDB" id="4C31"/>
    </source>
</evidence>
<evidence type="ECO:0007744" key="31">
    <source>
        <dbReference type="PDB" id="4FIP"/>
    </source>
</evidence>
<evidence type="ECO:0007744" key="32">
    <source>
        <dbReference type="PDB" id="4FJC"/>
    </source>
</evidence>
<evidence type="ECO:0007744" key="33">
    <source>
        <dbReference type="PDB" id="4FK5"/>
    </source>
</evidence>
<evidence type="ECO:0007744" key="34">
    <source>
        <dbReference type="PDB" id="4MBE"/>
    </source>
</evidence>
<evidence type="ECO:0007744" key="35">
    <source>
        <dbReference type="PDB" id="4ZUX"/>
    </source>
</evidence>
<evidence type="ECO:0007744" key="36">
    <source>
        <dbReference type="PDB" id="6T9L"/>
    </source>
</evidence>
<evidence type="ECO:0007744" key="37">
    <source>
    </source>
</evidence>
<evidence type="ECO:0007829" key="38">
    <source>
        <dbReference type="PDB" id="3MHS"/>
    </source>
</evidence>
<evidence type="ECO:0007829" key="39">
    <source>
        <dbReference type="PDB" id="4FK5"/>
    </source>
</evidence>
<feature type="chain" id="PRO_0000227806" description="SAGA complex subunit SUS1">
    <location>
        <begin position="1"/>
        <end position="96"/>
    </location>
</feature>
<feature type="cross-link" description="Glycyl lysine isopeptide (Lys-Gly) (interchain with G-Cter in ubiquitin)" evidence="37">
    <location>
        <position position="68"/>
    </location>
</feature>
<feature type="mutagenesis site" description="In sus1-10; dissociates from TREX-2 while leaving its interaction with SAGA intact." evidence="11">
    <original>ESG</original>
    <variation>AAA</variation>
    <location>
        <begin position="18"/>
        <end position="20"/>
    </location>
</feature>
<feature type="mutagenesis site" description="In sus1-11; impairs binding to both TREX-2 and SAGA." evidence="11">
    <original>GW</original>
    <variation>AA</variation>
    <location>
        <begin position="37"/>
        <end position="38"/>
    </location>
</feature>
<feature type="mutagenesis site" description="In sus1-12; dissociates from TREX-2 while leaving its interaction with SAGA intact." evidence="11">
    <original>VSD</original>
    <variation>ASA</variation>
    <location>
        <begin position="73"/>
        <end position="75"/>
    </location>
</feature>
<feature type="helix" evidence="38">
    <location>
        <begin position="7"/>
        <end position="18"/>
    </location>
</feature>
<feature type="helix" evidence="38">
    <location>
        <begin position="21"/>
        <end position="35"/>
    </location>
</feature>
<feature type="helix" evidence="38">
    <location>
        <begin position="38"/>
        <end position="53"/>
    </location>
</feature>
<feature type="helix" evidence="38">
    <location>
        <begin position="58"/>
        <end position="71"/>
    </location>
</feature>
<feature type="helix" evidence="38">
    <location>
        <begin position="75"/>
        <end position="92"/>
    </location>
</feature>
<feature type="strand" evidence="39">
    <location>
        <begin position="93"/>
        <end position="96"/>
    </location>
</feature>
<keyword id="KW-0002">3D-structure</keyword>
<keyword id="KW-0010">Activator</keyword>
<keyword id="KW-0156">Chromatin regulator</keyword>
<keyword id="KW-0963">Cytoplasm</keyword>
<keyword id="KW-1017">Isopeptide bond</keyword>
<keyword id="KW-0509">mRNA transport</keyword>
<keyword id="KW-0539">Nucleus</keyword>
<keyword id="KW-0653">Protein transport</keyword>
<keyword id="KW-1185">Reference proteome</keyword>
<keyword id="KW-0804">Transcription</keyword>
<keyword id="KW-0805">Transcription regulation</keyword>
<keyword id="KW-0811">Translocation</keyword>
<keyword id="KW-0813">Transport</keyword>
<keyword id="KW-0832">Ubl conjugation</keyword>
<dbReference type="EMBL" id="AY278445">
    <property type="protein sequence ID" value="AAQ19492.1"/>
    <property type="molecule type" value="mRNA"/>
</dbReference>
<dbReference type="EMBL" id="Z35980">
    <property type="status" value="NOT_ANNOTATED_CDS"/>
    <property type="molecule type" value="Genomic_DNA"/>
</dbReference>
<dbReference type="EMBL" id="Z35981">
    <property type="status" value="NOT_ANNOTATED_CDS"/>
    <property type="molecule type" value="Genomic_DNA"/>
</dbReference>
<dbReference type="EMBL" id="BK006936">
    <property type="protein sequence ID" value="DAA07231.1"/>
    <property type="molecule type" value="Genomic_DNA"/>
</dbReference>
<dbReference type="RefSeq" id="NP_878049.2">
    <property type="nucleotide sequence ID" value="NM_001184520.1"/>
</dbReference>
<dbReference type="PDB" id="3FWB">
    <property type="method" value="X-ray"/>
    <property type="resolution" value="2.50 A"/>
    <property type="chains" value="C=1-96"/>
</dbReference>
<dbReference type="PDB" id="3FWC">
    <property type="method" value="X-ray"/>
    <property type="resolution" value="2.70 A"/>
    <property type="chains" value="C/D/G/H/K/L/O/P=1-96"/>
</dbReference>
<dbReference type="PDB" id="3KIK">
    <property type="method" value="X-ray"/>
    <property type="resolution" value="2.10 A"/>
    <property type="chains" value="A/B/C/D=1-96"/>
</dbReference>
<dbReference type="PDB" id="3KJL">
    <property type="method" value="X-ray"/>
    <property type="resolution" value="2.70 A"/>
    <property type="chains" value="A/B/C/D=1-96"/>
</dbReference>
<dbReference type="PDB" id="3M99">
    <property type="method" value="X-ray"/>
    <property type="resolution" value="2.70 A"/>
    <property type="chains" value="C=1-96"/>
</dbReference>
<dbReference type="PDB" id="3MHH">
    <property type="method" value="X-ray"/>
    <property type="resolution" value="2.45 A"/>
    <property type="chains" value="B=1-96"/>
</dbReference>
<dbReference type="PDB" id="3MHS">
    <property type="method" value="X-ray"/>
    <property type="resolution" value="1.89 A"/>
    <property type="chains" value="B=1-96"/>
</dbReference>
<dbReference type="PDB" id="4C31">
    <property type="method" value="X-ray"/>
    <property type="resolution" value="3.00 A"/>
    <property type="chains" value="B/E=1-96"/>
</dbReference>
<dbReference type="PDB" id="4FIP">
    <property type="method" value="X-ray"/>
    <property type="resolution" value="2.69 A"/>
    <property type="chains" value="B/F=1-96"/>
</dbReference>
<dbReference type="PDB" id="4FJC">
    <property type="method" value="X-ray"/>
    <property type="resolution" value="2.83 A"/>
    <property type="chains" value="B/F=1-96"/>
</dbReference>
<dbReference type="PDB" id="4FK5">
    <property type="method" value="X-ray"/>
    <property type="resolution" value="2.03 A"/>
    <property type="chains" value="B=1-96"/>
</dbReference>
<dbReference type="PDB" id="4MBE">
    <property type="method" value="X-ray"/>
    <property type="resolution" value="2.61 A"/>
    <property type="chains" value="C/F=1-96"/>
</dbReference>
<dbReference type="PDB" id="4WA6">
    <property type="method" value="X-ray"/>
    <property type="resolution" value="2.36 A"/>
    <property type="chains" value="B/F=1-96"/>
</dbReference>
<dbReference type="PDB" id="4ZUX">
    <property type="method" value="X-ray"/>
    <property type="resolution" value="3.82 A"/>
    <property type="chains" value="V/a/f/k=1-96"/>
</dbReference>
<dbReference type="PDB" id="6AQR">
    <property type="method" value="X-ray"/>
    <property type="resolution" value="2.10 A"/>
    <property type="chains" value="B=1-96"/>
</dbReference>
<dbReference type="PDB" id="6T9L">
    <property type="method" value="EM"/>
    <property type="resolution" value="3.60 A"/>
    <property type="chains" value="L=1-96"/>
</dbReference>
<dbReference type="PDBsum" id="3FWB"/>
<dbReference type="PDBsum" id="3FWC"/>
<dbReference type="PDBsum" id="3KIK"/>
<dbReference type="PDBsum" id="3KJL"/>
<dbReference type="PDBsum" id="3M99"/>
<dbReference type="PDBsum" id="3MHH"/>
<dbReference type="PDBsum" id="3MHS"/>
<dbReference type="PDBsum" id="4C31"/>
<dbReference type="PDBsum" id="4FIP"/>
<dbReference type="PDBsum" id="4FJC"/>
<dbReference type="PDBsum" id="4FK5"/>
<dbReference type="PDBsum" id="4MBE"/>
<dbReference type="PDBsum" id="4WA6"/>
<dbReference type="PDBsum" id="4ZUX"/>
<dbReference type="PDBsum" id="6AQR"/>
<dbReference type="PDBsum" id="6T9L"/>
<dbReference type="EMDB" id="EMD-10415"/>
<dbReference type="SMR" id="Q6WNK7"/>
<dbReference type="BioGRID" id="36987">
    <property type="interactions" value="425"/>
</dbReference>
<dbReference type="ComplexPortal" id="CPX-1686">
    <property type="entry name" value="TREX-2 transcription-export complex"/>
</dbReference>
<dbReference type="ComplexPortal" id="CPX-656">
    <property type="entry name" value="SAGA complex"/>
</dbReference>
<dbReference type="ComplexPortal" id="CPX-675">
    <property type="entry name" value="SLIK (SAGA-like) complex"/>
</dbReference>
<dbReference type="DIP" id="DIP-45499N"/>
<dbReference type="FunCoup" id="Q6WNK7">
    <property type="interactions" value="424"/>
</dbReference>
<dbReference type="IntAct" id="Q6WNK7">
    <property type="interactions" value="95"/>
</dbReference>
<dbReference type="MINT" id="Q6WNK7"/>
<dbReference type="STRING" id="4932.YBR111W-A"/>
<dbReference type="TCDB" id="3.A.22.1.1">
    <property type="family name" value="the transcription-coupled trex/tap nuclear mrna export complex (trex) family"/>
</dbReference>
<dbReference type="iPTMnet" id="Q6WNK7"/>
<dbReference type="PaxDb" id="4932-YBR111W-A"/>
<dbReference type="PeptideAtlas" id="Q6WNK7"/>
<dbReference type="EnsemblFungi" id="YBR111W-A_mRNA">
    <property type="protein sequence ID" value="YBR111W-A"/>
    <property type="gene ID" value="YBR111W-A"/>
</dbReference>
<dbReference type="GeneID" id="1466445"/>
<dbReference type="KEGG" id="sce:YBR111W-A"/>
<dbReference type="AGR" id="SGD:S000028510"/>
<dbReference type="SGD" id="S000028510">
    <property type="gene designation" value="SUS1"/>
</dbReference>
<dbReference type="VEuPathDB" id="FungiDB:YBR111W-A"/>
<dbReference type="eggNOG" id="ENOG502S9WJ">
    <property type="taxonomic scope" value="Eukaryota"/>
</dbReference>
<dbReference type="HOGENOM" id="CLU_134052_2_1_1"/>
<dbReference type="InParanoid" id="Q6WNK7"/>
<dbReference type="OMA" id="YESGWFD"/>
<dbReference type="OrthoDB" id="6221744at2759"/>
<dbReference type="BioCyc" id="YEAST:G3O-29255-MONOMER"/>
<dbReference type="BioGRID-ORCS" id="1466445">
    <property type="hits" value="0 hits in 10 CRISPR screens"/>
</dbReference>
<dbReference type="CD-CODE" id="A777E0F8">
    <property type="entry name" value="P-body"/>
</dbReference>
<dbReference type="EvolutionaryTrace" id="Q6WNK7"/>
<dbReference type="PRO" id="PR:Q6WNK7"/>
<dbReference type="Proteomes" id="UP000002311">
    <property type="component" value="Chromosome II"/>
</dbReference>
<dbReference type="RNAct" id="Q6WNK7">
    <property type="molecule type" value="protein"/>
</dbReference>
<dbReference type="GO" id="GO:0071819">
    <property type="term" value="C:DUBm complex"/>
    <property type="evidence" value="ECO:0000314"/>
    <property type="project" value="SGD"/>
</dbReference>
<dbReference type="GO" id="GO:0005643">
    <property type="term" value="C:nuclear pore"/>
    <property type="evidence" value="ECO:0000314"/>
    <property type="project" value="SGD"/>
</dbReference>
<dbReference type="GO" id="GO:0005654">
    <property type="term" value="C:nucleoplasm"/>
    <property type="evidence" value="ECO:0000314"/>
    <property type="project" value="SGD"/>
</dbReference>
<dbReference type="GO" id="GO:0005634">
    <property type="term" value="C:nucleus"/>
    <property type="evidence" value="ECO:0000303"/>
    <property type="project" value="ComplexPortal"/>
</dbReference>
<dbReference type="GO" id="GO:0000932">
    <property type="term" value="C:P-body"/>
    <property type="evidence" value="ECO:0007669"/>
    <property type="project" value="UniProtKB-SubCell"/>
</dbReference>
<dbReference type="GO" id="GO:0000124">
    <property type="term" value="C:SAGA complex"/>
    <property type="evidence" value="ECO:0000314"/>
    <property type="project" value="SGD"/>
</dbReference>
<dbReference type="GO" id="GO:0046695">
    <property type="term" value="C:SLIK (SAGA-like) complex"/>
    <property type="evidence" value="ECO:0000353"/>
    <property type="project" value="ComplexPortal"/>
</dbReference>
<dbReference type="GO" id="GO:0070390">
    <property type="term" value="C:transcription export complex 2"/>
    <property type="evidence" value="ECO:0000314"/>
    <property type="project" value="SGD"/>
</dbReference>
<dbReference type="GO" id="GO:0003682">
    <property type="term" value="F:chromatin binding"/>
    <property type="evidence" value="ECO:0000314"/>
    <property type="project" value="SGD"/>
</dbReference>
<dbReference type="GO" id="GO:0008047">
    <property type="term" value="F:enzyme activator activity"/>
    <property type="evidence" value="ECO:0000314"/>
    <property type="project" value="SGD"/>
</dbReference>
<dbReference type="GO" id="GO:0003713">
    <property type="term" value="F:transcription coactivator activity"/>
    <property type="evidence" value="ECO:0000318"/>
    <property type="project" value="GO_Central"/>
</dbReference>
<dbReference type="GO" id="GO:0006325">
    <property type="term" value="P:chromatin organization"/>
    <property type="evidence" value="ECO:0007669"/>
    <property type="project" value="UniProtKB-KW"/>
</dbReference>
<dbReference type="GO" id="GO:0006406">
    <property type="term" value="P:mRNA export from nucleus"/>
    <property type="evidence" value="ECO:0000303"/>
    <property type="project" value="ComplexPortal"/>
</dbReference>
<dbReference type="GO" id="GO:0071028">
    <property type="term" value="P:nuclear mRNA surveillance"/>
    <property type="evidence" value="ECO:0000315"/>
    <property type="project" value="SGD"/>
</dbReference>
<dbReference type="GO" id="GO:0016973">
    <property type="term" value="P:poly(A)+ mRNA export from nucleus"/>
    <property type="evidence" value="ECO:0000315"/>
    <property type="project" value="SGD"/>
</dbReference>
<dbReference type="GO" id="GO:0045944">
    <property type="term" value="P:positive regulation of transcription by RNA polymerase II"/>
    <property type="evidence" value="ECO:0000315"/>
    <property type="project" value="SGD"/>
</dbReference>
<dbReference type="GO" id="GO:0000973">
    <property type="term" value="P:post-transcriptional tethering of RNA polymerase II gene DNA at nuclear periphery"/>
    <property type="evidence" value="ECO:0000315"/>
    <property type="project" value="SGD"/>
</dbReference>
<dbReference type="GO" id="GO:0015031">
    <property type="term" value="P:protein transport"/>
    <property type="evidence" value="ECO:0007669"/>
    <property type="project" value="UniProtKB-KW"/>
</dbReference>
<dbReference type="GO" id="GO:0032880">
    <property type="term" value="P:regulation of protein localization"/>
    <property type="evidence" value="ECO:0000315"/>
    <property type="project" value="SGD"/>
</dbReference>
<dbReference type="GO" id="GO:0006357">
    <property type="term" value="P:regulation of transcription by RNA polymerase II"/>
    <property type="evidence" value="ECO:0000314"/>
    <property type="project" value="ComplexPortal"/>
</dbReference>
<dbReference type="GO" id="GO:0006368">
    <property type="term" value="P:transcription elongation by RNA polymerase II"/>
    <property type="evidence" value="ECO:0000315"/>
    <property type="project" value="SGD"/>
</dbReference>
<dbReference type="FunFam" id="1.10.246.140:FF:000004">
    <property type="entry name" value="Transcription and mRNA export factor SUS1"/>
    <property type="match status" value="1"/>
</dbReference>
<dbReference type="Gene3D" id="1.10.246.140">
    <property type="match status" value="1"/>
</dbReference>
<dbReference type="HAMAP" id="MF_03046">
    <property type="entry name" value="ENY2_Sus1"/>
    <property type="match status" value="1"/>
</dbReference>
<dbReference type="IDEAL" id="IID50337"/>
<dbReference type="InterPro" id="IPR018783">
    <property type="entry name" value="TF_ENY2"/>
</dbReference>
<dbReference type="InterPro" id="IPR038212">
    <property type="entry name" value="TF_EnY2_sf"/>
</dbReference>
<dbReference type="PANTHER" id="PTHR12514">
    <property type="entry name" value="ENHANCER OF YELLOW 2 TRANSCRIPTION FACTOR"/>
    <property type="match status" value="1"/>
</dbReference>
<dbReference type="Pfam" id="PF10163">
    <property type="entry name" value="EnY2"/>
    <property type="match status" value="1"/>
</dbReference>
<protein>
    <recommendedName>
        <fullName>SAGA complex subunit SUS1</fullName>
    </recommendedName>
    <alternativeName>
        <fullName evidence="1">Transcription and mRNA export factor SUS1</fullName>
    </alternativeName>
</protein>
<name>SUS1_YEAST</name>
<reference key="1">
    <citation type="journal article" date="2004" name="Cell">
        <title>Sus1, a functional component of the SAGA histone acetylase complex and the nuclear pore-associated mRNA export machinery.</title>
        <authorList>
            <person name="Rodriguez-Navarro S."/>
            <person name="Fischer T."/>
            <person name="Luo M.-J."/>
            <person name="Antunez O."/>
            <person name="Brettschneider S."/>
            <person name="Lechner J."/>
            <person name="Perez-Ortin J.E."/>
            <person name="Reed R."/>
            <person name="Hurt E.C."/>
        </authorList>
    </citation>
    <scope>NUCLEOTIDE SEQUENCE [MRNA]</scope>
    <scope>SUBCELLULAR LOCATION</scope>
    <scope>IDENTIFICATION IN THE SAGA AND TREX-2 COMPLEXES</scope>
    <scope>INTERACTION WITH SAC3 AND THP1</scope>
</reference>
<reference key="2">
    <citation type="journal article" date="1994" name="EMBO J.">
        <title>Complete DNA sequence of yeast chromosome II.</title>
        <authorList>
            <person name="Feldmann H."/>
            <person name="Aigle M."/>
            <person name="Aljinovic G."/>
            <person name="Andre B."/>
            <person name="Baclet M.C."/>
            <person name="Barthe C."/>
            <person name="Baur A."/>
            <person name="Becam A.-M."/>
            <person name="Biteau N."/>
            <person name="Boles E."/>
            <person name="Brandt T."/>
            <person name="Brendel M."/>
            <person name="Brueckner M."/>
            <person name="Bussereau F."/>
            <person name="Christiansen C."/>
            <person name="Contreras R."/>
            <person name="Crouzet M."/>
            <person name="Cziepluch C."/>
            <person name="Demolis N."/>
            <person name="Delaveau T."/>
            <person name="Doignon F."/>
            <person name="Domdey H."/>
            <person name="Duesterhus S."/>
            <person name="Dubois E."/>
            <person name="Dujon B."/>
            <person name="El Bakkoury M."/>
            <person name="Entian K.-D."/>
            <person name="Feuermann M."/>
            <person name="Fiers W."/>
            <person name="Fobo G.M."/>
            <person name="Fritz C."/>
            <person name="Gassenhuber J."/>
            <person name="Glansdorff N."/>
            <person name="Goffeau A."/>
            <person name="Grivell L.A."/>
            <person name="de Haan M."/>
            <person name="Hein C."/>
            <person name="Herbert C.J."/>
            <person name="Hollenberg C.P."/>
            <person name="Holmstroem K."/>
            <person name="Jacq C."/>
            <person name="Jacquet M."/>
            <person name="Jauniaux J.-C."/>
            <person name="Jonniaux J.-L."/>
            <person name="Kallesoee T."/>
            <person name="Kiesau P."/>
            <person name="Kirchrath L."/>
            <person name="Koetter P."/>
            <person name="Korol S."/>
            <person name="Liebl S."/>
            <person name="Logghe M."/>
            <person name="Lohan A.J.E."/>
            <person name="Louis E.J."/>
            <person name="Li Z.Y."/>
            <person name="Maat M.J."/>
            <person name="Mallet L."/>
            <person name="Mannhaupt G."/>
            <person name="Messenguy F."/>
            <person name="Miosga T."/>
            <person name="Molemans F."/>
            <person name="Mueller S."/>
            <person name="Nasr F."/>
            <person name="Obermaier B."/>
            <person name="Perea J."/>
            <person name="Pierard A."/>
            <person name="Piravandi E."/>
            <person name="Pohl F.M."/>
            <person name="Pohl T.M."/>
            <person name="Potier S."/>
            <person name="Proft M."/>
            <person name="Purnelle B."/>
            <person name="Ramezani Rad M."/>
            <person name="Rieger M."/>
            <person name="Rose M."/>
            <person name="Schaaff-Gerstenschlaeger I."/>
            <person name="Scherens B."/>
            <person name="Schwarzlose C."/>
            <person name="Skala J."/>
            <person name="Slonimski P.P."/>
            <person name="Smits P.H.M."/>
            <person name="Souciet J.-L."/>
            <person name="Steensma H.Y."/>
            <person name="Stucka R."/>
            <person name="Urrestarazu L.A."/>
            <person name="van der Aart Q.J.M."/>
            <person name="Van Dyck L."/>
            <person name="Vassarotti A."/>
            <person name="Vetter I."/>
            <person name="Vierendeels F."/>
            <person name="Vissers S."/>
            <person name="Wagner G."/>
            <person name="de Wergifosse P."/>
            <person name="Wolfe K.H."/>
            <person name="Zagulski M."/>
            <person name="Zimmermann F.K."/>
            <person name="Mewes H.-W."/>
            <person name="Kleine K."/>
        </authorList>
    </citation>
    <scope>NUCLEOTIDE SEQUENCE [LARGE SCALE GENOMIC DNA]</scope>
    <source>
        <strain>ATCC 204508 / S288c</strain>
    </source>
</reference>
<reference key="3">
    <citation type="journal article" date="2014" name="G3 (Bethesda)">
        <title>The reference genome sequence of Saccharomyces cerevisiae: Then and now.</title>
        <authorList>
            <person name="Engel S.R."/>
            <person name="Dietrich F.S."/>
            <person name="Fisk D.G."/>
            <person name="Binkley G."/>
            <person name="Balakrishnan R."/>
            <person name="Costanzo M.C."/>
            <person name="Dwight S.S."/>
            <person name="Hitz B.C."/>
            <person name="Karra K."/>
            <person name="Nash R.S."/>
            <person name="Weng S."/>
            <person name="Wong E.D."/>
            <person name="Lloyd P."/>
            <person name="Skrzypek M.S."/>
            <person name="Miyasato S.R."/>
            <person name="Simison M."/>
            <person name="Cherry J.M."/>
        </authorList>
    </citation>
    <scope>GENOME REANNOTATION</scope>
    <source>
        <strain>ATCC 204508 / S288c</strain>
    </source>
</reference>
<reference key="4">
    <citation type="journal article" date="2004" name="Mol. Cell">
        <title>Molecular architecture of the S. cerevisiae SAGA complex.</title>
        <authorList>
            <person name="Wu P.Y."/>
            <person name="Ruhlmann C."/>
            <person name="Winston F."/>
            <person name="Schultz P."/>
        </authorList>
    </citation>
    <scope>3D-STRUCTURE MODELING OF THE SAGA COMPLEX</scope>
</reference>
<reference key="5">
    <citation type="journal article" date="2004" name="Nat. Cell Biol.">
        <title>Yeast centrin Cdc31 is linked to the nuclear mRNA export machinery.</title>
        <authorList>
            <person name="Fischer T."/>
            <person name="Rodriguez-Navarro S."/>
            <person name="Pereira G."/>
            <person name="Racz A."/>
            <person name="Schiebel E."/>
            <person name="Hurt E.C."/>
        </authorList>
    </citation>
    <scope>FUNCTION</scope>
    <scope>IDENTIFICATION IN THE TREX-2 COMPLEX</scope>
    <scope>IDENTIFICATION BY MASS SPECTROMETRY</scope>
    <scope>INTERACTION WITH SAC3</scope>
</reference>
<reference key="6">
    <citation type="journal article" date="2006" name="Genome Res.">
        <title>Functional genomics of genes with small open reading frames (sORFs) in S. cerevisiae.</title>
        <authorList>
            <person name="Kastenmayer J.P."/>
            <person name="Ni L."/>
            <person name="Chu A."/>
            <person name="Kitchen L.E."/>
            <person name="Au W.-C."/>
            <person name="Yang H."/>
            <person name="Carter C.D."/>
            <person name="Wheeler D."/>
            <person name="Davis R.W."/>
            <person name="Boeke J.D."/>
            <person name="Snyder M.A."/>
            <person name="Basrai M.A."/>
        </authorList>
    </citation>
    <scope>FUNCTION</scope>
</reference>
<reference key="7">
    <citation type="journal article" date="2006" name="Mol. Biol. Cell">
        <title>The mRNA export factor Sus1 is involved in Spt/Ada/Gcn5 acetyltransferase-mediated H2B deubiquitinylation through its interaction with Ubp8 and Sgf11.</title>
        <authorList>
            <person name="Koehler A."/>
            <person name="Pascual-Garcia P."/>
            <person name="Llopis A."/>
            <person name="Zapater M."/>
            <person name="Posas F."/>
            <person name="Hurt E.C."/>
            <person name="Rodriguez-Navarro S."/>
        </authorList>
    </citation>
    <scope>FUNCTION</scope>
    <scope>INTERACTION WITH SGF11 AND UBP8</scope>
    <scope>IDENTIFICATION IN THE SAGA COMPLEX</scope>
    <scope>SUBCELLULAR LOCATION</scope>
</reference>
<reference key="8">
    <citation type="journal article" date="2006" name="Nature">
        <title>SAGA interacting factors confine sub-diffusion of transcribed genes to the nuclear envelope.</title>
        <authorList>
            <person name="Cabal G.G."/>
            <person name="Genovesio A."/>
            <person name="Rodriguez-Navarro S."/>
            <person name="Zimmer C."/>
            <person name="Gadal O."/>
            <person name="Lesne A."/>
            <person name="Buc H."/>
            <person name="Feuerbach-Fournier F."/>
            <person name="Olivo-Marin J.-C."/>
            <person name="Hurt E.C."/>
            <person name="Nehrbass U."/>
        </authorList>
    </citation>
    <scope>FUNCTION</scope>
</reference>
<reference key="9">
    <citation type="journal article" date="2008" name="Genes Dev.">
        <title>Sus1 is recruited to coding regions and functions during transcription elongation in association with SAGA and TREX2.</title>
        <authorList>
            <person name="Pascual-Garcia P."/>
            <person name="Govind C.K."/>
            <person name="Queralt E."/>
            <person name="Cuenca-Bono B."/>
            <person name="Llopis A."/>
            <person name="Chavez S."/>
            <person name="Hinnebusch A.G."/>
            <person name="Rodriguez-Navarro S."/>
        </authorList>
    </citation>
    <scope>FUNCTION</scope>
    <scope>INTERACTION WITH YRA1; MEX67 AND THE RNA POLYMERASE II COMPLEX</scope>
</reference>
<reference key="10">
    <citation type="journal article" date="2008" name="Mol. Biol. Cell">
        <title>The THP1-SAC3-SUS1-CDC31 complex works in transcription elongation-mRNA export preventing RNA-mediated genome instability.</title>
        <authorList>
            <person name="Gonzalez-Aguilera C."/>
            <person name="Tous C."/>
            <person name="Gomez-Gonzalez B."/>
            <person name="Huertas P."/>
            <person name="Luna R."/>
            <person name="Aguilera A."/>
        </authorList>
    </citation>
    <scope>FUNCTION OF THE TREX-2 COMPLEX</scope>
</reference>
<reference key="11">
    <citation type="journal article" date="2008" name="Nat. Cell Biol.">
        <title>Yeast Ataxin-7 links histone deubiquitination with gene gating and mRNA export.</title>
        <authorList>
            <person name="Koehler A."/>
            <person name="Schneider M."/>
            <person name="Cabal G.G."/>
            <person name="Nehrbass U."/>
            <person name="Hurt E."/>
        </authorList>
    </citation>
    <scope>IDENTIFICATION IN THE SAGA AND TREX-2 COMPLEXES</scope>
</reference>
<reference key="12">
    <citation type="journal article" date="2008" name="RNA">
        <title>Sus1, Sac3, and Thp1 mediate post-transcriptional tethering of active genes to the nuclear rim as well as to non-nascent mRNP.</title>
        <authorList>
            <person name="Chekanova J.A."/>
            <person name="Abruzzi K.C."/>
            <person name="Rosbash M."/>
            <person name="Belostotsky D.A."/>
        </authorList>
    </citation>
    <scope>FUNCTION OF THE TREX-2 COMPLEX</scope>
</reference>
<reference key="13">
    <citation type="journal article" date="2009" name="J. Biol. Chem.">
        <title>Mutational uncoupling of the role of Sus1 in nuclear pore complex targeting of an mRNA export complex and histone H2B deubiquitination.</title>
        <authorList>
            <person name="Kloeckner C."/>
            <person name="Schneider M."/>
            <person name="Lutz S."/>
            <person name="Jani D."/>
            <person name="Kressler D."/>
            <person name="Stewart M."/>
            <person name="Hurt E."/>
            <person name="Koehler A."/>
        </authorList>
    </citation>
    <scope>MUTAGENESIS OF 18-GLU--GLY-20; 37-GLY-TRP-38 AND 73-VAL--ASP-75</scope>
</reference>
<reference key="14">
    <citation type="journal article" date="2010" name="BMC Cell Biol.">
        <title>A novel link between Sus1 and the cytoplasmic mRNA decay machinery suggests a broad role in mRNA metabolism.</title>
        <authorList>
            <person name="Cuenca-Bono B."/>
            <person name="Garcia-Molinero V."/>
            <person name="Pascual-Garcia P."/>
            <person name="Garcia-Oliver E."/>
            <person name="Llopis A."/>
            <person name="Rodriguez-Navarro S."/>
        </authorList>
    </citation>
    <scope>FUNCTION</scope>
    <scope>SUBCELLULAR LOCATION</scope>
</reference>
<reference key="15">
    <citation type="journal article" date="2011" name="Nucleic Acids Res.">
        <title>SUS1 introns are required for efficient mRNA nuclear export in yeast.</title>
        <authorList>
            <person name="Cuenca-Bono B."/>
            <person name="Garcia-Molinero V."/>
            <person name="Pascual-Garcia P."/>
            <person name="Dopazo H."/>
            <person name="Llopis A."/>
            <person name="Vilardell J."/>
            <person name="Rodriguez-Navarro S."/>
        </authorList>
    </citation>
    <scope>FUNCTION</scope>
    <scope>INDUCTION</scope>
</reference>
<reference key="16">
    <citation type="journal article" date="2011" name="Nucleic Acids Res.">
        <title>Key features of the two-intron Saccharomyces cerevisiae gene SUS1 contribute to its alternative splicing.</title>
        <authorList>
            <person name="Hossain M.A."/>
            <person name="Rodriguez C.M."/>
            <person name="Johnson T.L."/>
        </authorList>
    </citation>
    <scope>FUNCTION</scope>
    <scope>INDUCTION</scope>
</reference>
<reference key="17">
    <citation type="journal article" date="2012" name="Proteomics">
        <title>Sites of ubiquitin attachment in Saccharomyces cerevisiae.</title>
        <authorList>
            <person name="Starita L.M."/>
            <person name="Lo R.S."/>
            <person name="Eng J.K."/>
            <person name="von Haller P.D."/>
            <person name="Fields S."/>
        </authorList>
    </citation>
    <scope>UBIQUITINATION [LARGE SCALE ANALYSIS] AT LYS-68</scope>
    <scope>IDENTIFICATION BY MASS SPECTROMETRY [LARGE SCALE ANALYSIS]</scope>
</reference>
<reference key="18">
    <citation type="journal article" date="2013" name="Nucleic Acids Res.">
        <title>A novel role for Sem1 and TREX-2 in transcription involves their impact on recruitment and H2B deubiquitylation activity of SAGA.</title>
        <authorList>
            <person name="Garcia-Oliver E."/>
            <person name="Pascual-Garcia P."/>
            <person name="Garcia-Molinero V."/>
            <person name="Lenstra T.L."/>
            <person name="Holstege F.C."/>
            <person name="Rodriguez-Navarro S."/>
        </authorList>
    </citation>
    <scope>IDENTIFICATION IN THE TREX-2 COMPLEX</scope>
    <scope>INTERACTION WITH SEM1</scope>
</reference>
<reference key="19">
    <citation type="journal article" date="2014" name="EMBO J.">
        <title>Architecture of the Saccharomyces cerevisiae SAGA transcription coactivator complex.</title>
        <authorList>
            <person name="Han Y."/>
            <person name="Luo J."/>
            <person name="Ranish J."/>
            <person name="Hahn S."/>
        </authorList>
    </citation>
    <scope>SUBUNIT</scope>
</reference>
<reference key="20">
    <citation type="journal article" date="2017" name="Mol. Cell">
        <title>SAGA is a general cofactor for RNA polymerase II transcription.</title>
        <authorList>
            <person name="Baptista T."/>
            <person name="Gruenberg S."/>
            <person name="Minoungou N."/>
            <person name="Koster M.J.E."/>
            <person name="Timmers H.T.M."/>
            <person name="Hahn S."/>
            <person name="Devys D."/>
            <person name="Tora L."/>
        </authorList>
    </citation>
    <scope>FUNCTION</scope>
</reference>
<reference key="21">
    <citation type="journal article" date="2018" name="Epigenetics Chromatin">
        <title>The SAGA/TREX-2 subunit Sus1 binds widely to transcribed genes and affects mRNA turnover globally.</title>
        <authorList>
            <person name="Garcia-Molinero V."/>
            <person name="Garcia-Martinez J."/>
            <person name="Reja R."/>
            <person name="Furio-Tari P."/>
            <person name="Antunez O."/>
            <person name="Vinayachandran V."/>
            <person name="Conesa A."/>
            <person name="Pugh B.F."/>
            <person name="Perez-Ortin J.E."/>
            <person name="Rodriguez-Navarro S."/>
        </authorList>
    </citation>
    <scope>FUNCTION</scope>
</reference>
<reference key="22">
    <citation type="journal article" date="2021" name="J. Biol. Chem.">
        <title>SAGA and SAGA-like SLIK transcriptional coactivators are structurally and biochemically equivalent.</title>
        <authorList>
            <person name="Adamus K."/>
            <person name="Reboul C."/>
            <person name="Voss J."/>
            <person name="Huang C."/>
            <person name="Schittenhelm R.B."/>
            <person name="Le S.N."/>
            <person name="Ellisdon A.M."/>
            <person name="Elmlund H."/>
            <person name="Boudes M."/>
            <person name="Elmlund D."/>
        </authorList>
    </citation>
    <scope>FUNCTION</scope>
    <scope>SUBUNIT</scope>
</reference>
<reference evidence="23 24" key="23">
    <citation type="journal article" date="2009" name="Mol. Cell">
        <title>Sus1, Cdc31, and the Sac3 CID region form a conserved interaction platform that promotes nuclear pore association and mRNA export.</title>
        <authorList>
            <person name="Jani D."/>
            <person name="Lutz S."/>
            <person name="Marshall N.J."/>
            <person name="Fischer T."/>
            <person name="Kohler A."/>
            <person name="Ellisdon A.M."/>
            <person name="Hurt E."/>
            <person name="Stewart M."/>
        </authorList>
    </citation>
    <scope>X-RAY CRYSTALLOGRAPHY (2.50 ANGSTROMS) IN THE TREX-2 COMPLEX</scope>
</reference>
<reference evidence="27" key="24">
    <citation type="journal article" date="2010" name="Cell">
        <title>Structural basis for assembly and activation of the heterotetrameric SAGA histone H2B deubiquitinase module.</title>
        <authorList>
            <person name="Kohler A."/>
            <person name="Zimmerman E."/>
            <person name="Schneider M."/>
            <person name="Hurt E."/>
            <person name="Zheng N."/>
        </authorList>
    </citation>
    <scope>X-RAY CRYSTALLOGRAPHY (2.70 ANGSTROMS) IN THE SAGA COMPLEX</scope>
</reference>
<reference evidence="25 26" key="25">
    <citation type="journal article" date="2010" name="J. Biol. Chem.">
        <title>Structural basis for the interaction between yeast Spt-Ada-Gcn5 acetyltransferase (SAGA) complex components Sgf11 and Sus1.</title>
        <authorList>
            <person name="Ellisdon A.M."/>
            <person name="Jani D."/>
            <person name="Kohler A."/>
            <person name="Hurt E."/>
            <person name="Stewart M."/>
        </authorList>
    </citation>
    <scope>X-RAY CRYSTALLOGRAPHY (2.10 ANGSTROMS)</scope>
</reference>
<reference evidence="28 29" key="26">
    <citation type="journal article" date="2010" name="Science">
        <title>Structural insights into the assembly and function of the SAGA deubiquitinating module.</title>
        <authorList>
            <person name="Samara N.L."/>
            <person name="Datta A.B."/>
            <person name="Berndsen C.E."/>
            <person name="Zhang X."/>
            <person name="Yao T."/>
            <person name="Cohen R.E."/>
            <person name="Wolberger C."/>
        </authorList>
    </citation>
    <scope>X-RAY CRYSTALLOGRAPHY (1.89 ANGSTROMS)</scope>
</reference>
<reference evidence="31 32 33" key="27">
    <citation type="journal article" date="2012" name="Structure">
        <title>A role for intersubunit interactions in maintaining SAGA deubiquitinating module structure and activity.</title>
        <authorList>
            <person name="Samara N.L."/>
            <person name="Ringel A.E."/>
            <person name="Wolberger C."/>
        </authorList>
    </citation>
    <scope>X-RAY CRYSTALLOGRAPHY (2.03 ANGSTROMS)</scope>
</reference>
<reference evidence="30 34" key="28">
    <citation type="journal article" date="2014" name="Nucleic Acids Res.">
        <title>Structural basis for binding the TREX2 complex to nuclear pores, GAL1 localisation and mRNA export.</title>
        <authorList>
            <person name="Jani D."/>
            <person name="Valkov E."/>
            <person name="Stewart M."/>
        </authorList>
    </citation>
    <scope>X-RAY CRYSTALLOGRAPHY (2.61 ANGSTROMS) IN THE TREX-2 COMPLEX</scope>
</reference>
<reference evidence="35" key="29">
    <citation type="journal article" date="2016" name="Science">
        <title>Structural basis for histone H2B deubiquitination by the SAGA DUB module.</title>
        <authorList>
            <person name="Morgan M.T."/>
            <person name="Haj-Yahya M."/>
            <person name="Ringel A.E."/>
            <person name="Bandi P."/>
            <person name="Brik A."/>
            <person name="Wolberger C."/>
        </authorList>
    </citation>
    <scope>X-RAY CRYSTALLOGRAPHY (3.82 ANGSTROMS)</scope>
</reference>
<reference evidence="36" key="30">
    <citation type="journal article" date="2020" name="Nature">
        <title>Structure of the transcription coactivator SAGA.</title>
        <authorList>
            <person name="Wang H."/>
            <person name="Dienemann C."/>
            <person name="Stutzer A."/>
            <person name="Urlaub H."/>
            <person name="Cheung A.C.M."/>
            <person name="Cramer P."/>
        </authorList>
    </citation>
    <scope>STRUCTURE BY ELECTRON MICROSCOPY (3.60 ANGSTROMS) IN THE SAGA COMPLEX</scope>
</reference>